<keyword id="KW-0687">Ribonucleoprotein</keyword>
<keyword id="KW-0689">Ribosomal protein</keyword>
<keyword id="KW-0694">RNA-binding</keyword>
<keyword id="KW-0699">rRNA-binding</keyword>
<feature type="chain" id="PRO_0000111227" description="Small ribosomal subunit protein bS18">
    <location>
        <begin position="1"/>
        <end position="80"/>
    </location>
</feature>
<dbReference type="EMBL" id="BX571856">
    <property type="protein sequence ID" value="CAG39387.1"/>
    <property type="molecule type" value="Genomic_DNA"/>
</dbReference>
<dbReference type="RefSeq" id="WP_000897044.1">
    <property type="nucleotide sequence ID" value="NC_002952.2"/>
</dbReference>
<dbReference type="SMR" id="Q6GJV1"/>
<dbReference type="GeneID" id="98344693"/>
<dbReference type="KEGG" id="sar:SAR0364"/>
<dbReference type="HOGENOM" id="CLU_148710_2_2_9"/>
<dbReference type="Proteomes" id="UP000000596">
    <property type="component" value="Chromosome"/>
</dbReference>
<dbReference type="GO" id="GO:0022627">
    <property type="term" value="C:cytosolic small ribosomal subunit"/>
    <property type="evidence" value="ECO:0007669"/>
    <property type="project" value="TreeGrafter"/>
</dbReference>
<dbReference type="GO" id="GO:0070181">
    <property type="term" value="F:small ribosomal subunit rRNA binding"/>
    <property type="evidence" value="ECO:0007669"/>
    <property type="project" value="TreeGrafter"/>
</dbReference>
<dbReference type="GO" id="GO:0003735">
    <property type="term" value="F:structural constituent of ribosome"/>
    <property type="evidence" value="ECO:0007669"/>
    <property type="project" value="InterPro"/>
</dbReference>
<dbReference type="GO" id="GO:0006412">
    <property type="term" value="P:translation"/>
    <property type="evidence" value="ECO:0007669"/>
    <property type="project" value="UniProtKB-UniRule"/>
</dbReference>
<dbReference type="FunFam" id="4.10.640.10:FF:000003">
    <property type="entry name" value="30S ribosomal protein S18"/>
    <property type="match status" value="1"/>
</dbReference>
<dbReference type="Gene3D" id="4.10.640.10">
    <property type="entry name" value="Ribosomal protein S18"/>
    <property type="match status" value="1"/>
</dbReference>
<dbReference type="HAMAP" id="MF_00270">
    <property type="entry name" value="Ribosomal_bS18"/>
    <property type="match status" value="1"/>
</dbReference>
<dbReference type="InterPro" id="IPR001648">
    <property type="entry name" value="Ribosomal_bS18"/>
</dbReference>
<dbReference type="InterPro" id="IPR018275">
    <property type="entry name" value="Ribosomal_bS18_CS"/>
</dbReference>
<dbReference type="InterPro" id="IPR036870">
    <property type="entry name" value="Ribosomal_bS18_sf"/>
</dbReference>
<dbReference type="NCBIfam" id="TIGR00165">
    <property type="entry name" value="S18"/>
    <property type="match status" value="1"/>
</dbReference>
<dbReference type="PANTHER" id="PTHR13479">
    <property type="entry name" value="30S RIBOSOMAL PROTEIN S18"/>
    <property type="match status" value="1"/>
</dbReference>
<dbReference type="PANTHER" id="PTHR13479:SF40">
    <property type="entry name" value="SMALL RIBOSOMAL SUBUNIT PROTEIN BS18M"/>
    <property type="match status" value="1"/>
</dbReference>
<dbReference type="Pfam" id="PF01084">
    <property type="entry name" value="Ribosomal_S18"/>
    <property type="match status" value="1"/>
</dbReference>
<dbReference type="PRINTS" id="PR00974">
    <property type="entry name" value="RIBOSOMALS18"/>
</dbReference>
<dbReference type="SUPFAM" id="SSF46911">
    <property type="entry name" value="Ribosomal protein S18"/>
    <property type="match status" value="1"/>
</dbReference>
<dbReference type="PROSITE" id="PS00057">
    <property type="entry name" value="RIBOSOMAL_S18"/>
    <property type="match status" value="1"/>
</dbReference>
<evidence type="ECO:0000255" key="1">
    <source>
        <dbReference type="HAMAP-Rule" id="MF_00270"/>
    </source>
</evidence>
<evidence type="ECO:0000305" key="2"/>
<protein>
    <recommendedName>
        <fullName evidence="1">Small ribosomal subunit protein bS18</fullName>
    </recommendedName>
    <alternativeName>
        <fullName evidence="2">30S ribosomal protein S18</fullName>
    </alternativeName>
</protein>
<name>RS18_STAAR</name>
<sequence>MAGGPRRGGRRRKKVCYFTANGITHIDYKDTELLKRFISERGKILPRRVTGTSAKYQRMLTTAIKRSRHMALLPYVKEEQ</sequence>
<comment type="function">
    <text evidence="1">Binds as a heterodimer with protein bS6 to the central domain of the 16S rRNA, where it helps stabilize the platform of the 30S subunit.</text>
</comment>
<comment type="subunit">
    <text evidence="1">Part of the 30S ribosomal subunit. Forms a tight heterodimer with protein bS6.</text>
</comment>
<comment type="similarity">
    <text evidence="1">Belongs to the bacterial ribosomal protein bS18 family.</text>
</comment>
<reference key="1">
    <citation type="journal article" date="2004" name="Proc. Natl. Acad. Sci. U.S.A.">
        <title>Complete genomes of two clinical Staphylococcus aureus strains: evidence for the rapid evolution of virulence and drug resistance.</title>
        <authorList>
            <person name="Holden M.T.G."/>
            <person name="Feil E.J."/>
            <person name="Lindsay J.A."/>
            <person name="Peacock S.J."/>
            <person name="Day N.P.J."/>
            <person name="Enright M.C."/>
            <person name="Foster T.J."/>
            <person name="Moore C.E."/>
            <person name="Hurst L."/>
            <person name="Atkin R."/>
            <person name="Barron A."/>
            <person name="Bason N."/>
            <person name="Bentley S.D."/>
            <person name="Chillingworth C."/>
            <person name="Chillingworth T."/>
            <person name="Churcher C."/>
            <person name="Clark L."/>
            <person name="Corton C."/>
            <person name="Cronin A."/>
            <person name="Doggett J."/>
            <person name="Dowd L."/>
            <person name="Feltwell T."/>
            <person name="Hance Z."/>
            <person name="Harris B."/>
            <person name="Hauser H."/>
            <person name="Holroyd S."/>
            <person name="Jagels K."/>
            <person name="James K.D."/>
            <person name="Lennard N."/>
            <person name="Line A."/>
            <person name="Mayes R."/>
            <person name="Moule S."/>
            <person name="Mungall K."/>
            <person name="Ormond D."/>
            <person name="Quail M.A."/>
            <person name="Rabbinowitsch E."/>
            <person name="Rutherford K.M."/>
            <person name="Sanders M."/>
            <person name="Sharp S."/>
            <person name="Simmonds M."/>
            <person name="Stevens K."/>
            <person name="Whitehead S."/>
            <person name="Barrell B.G."/>
            <person name="Spratt B.G."/>
            <person name="Parkhill J."/>
        </authorList>
    </citation>
    <scope>NUCLEOTIDE SEQUENCE [LARGE SCALE GENOMIC DNA]</scope>
    <source>
        <strain>MRSA252</strain>
    </source>
</reference>
<accession>Q6GJV1</accession>
<gene>
    <name evidence="1" type="primary">rpsR</name>
    <name type="ordered locus">SAR0364</name>
</gene>
<organism>
    <name type="scientific">Staphylococcus aureus (strain MRSA252)</name>
    <dbReference type="NCBI Taxonomy" id="282458"/>
    <lineage>
        <taxon>Bacteria</taxon>
        <taxon>Bacillati</taxon>
        <taxon>Bacillota</taxon>
        <taxon>Bacilli</taxon>
        <taxon>Bacillales</taxon>
        <taxon>Staphylococcaceae</taxon>
        <taxon>Staphylococcus</taxon>
    </lineage>
</organism>
<proteinExistence type="inferred from homology"/>